<comment type="function">
    <text evidence="1">Inhibits all the catalytic activities of DNA gyrase by preventing its interaction with DNA. Acts by binding directly to the C-terminal domain of GyrB, which probably disrupts DNA binding by the gyrase.</text>
</comment>
<comment type="cofactor">
    <cofactor evidence="1">
        <name>Zn(2+)</name>
        <dbReference type="ChEBI" id="CHEBI:29105"/>
    </cofactor>
    <text evidence="1">Binds 1 zinc ion.</text>
</comment>
<comment type="subunit">
    <text evidence="1">Interacts with GyrB.</text>
</comment>
<comment type="similarity">
    <text evidence="1">Belongs to the DNA gyrase inhibitor YacG family.</text>
</comment>
<reference key="1">
    <citation type="journal article" date="2008" name="J. Bacteriol.">
        <title>The complete genome sequence of Escherichia coli DH10B: insights into the biology of a laboratory workhorse.</title>
        <authorList>
            <person name="Durfee T."/>
            <person name="Nelson R."/>
            <person name="Baldwin S."/>
            <person name="Plunkett G. III"/>
            <person name="Burland V."/>
            <person name="Mau B."/>
            <person name="Petrosino J.F."/>
            <person name="Qin X."/>
            <person name="Muzny D.M."/>
            <person name="Ayele M."/>
            <person name="Gibbs R.A."/>
            <person name="Csorgo B."/>
            <person name="Posfai G."/>
            <person name="Weinstock G.M."/>
            <person name="Blattner F.R."/>
        </authorList>
    </citation>
    <scope>NUCLEOTIDE SEQUENCE [LARGE SCALE GENOMIC DNA]</scope>
    <source>
        <strain>K12 / DH10B</strain>
    </source>
</reference>
<evidence type="ECO:0000255" key="1">
    <source>
        <dbReference type="HAMAP-Rule" id="MF_00649"/>
    </source>
</evidence>
<evidence type="ECO:0000256" key="2">
    <source>
        <dbReference type="SAM" id="MobiDB-lite"/>
    </source>
</evidence>
<organism>
    <name type="scientific">Escherichia coli (strain K12 / DH10B)</name>
    <dbReference type="NCBI Taxonomy" id="316385"/>
    <lineage>
        <taxon>Bacteria</taxon>
        <taxon>Pseudomonadati</taxon>
        <taxon>Pseudomonadota</taxon>
        <taxon>Gammaproteobacteria</taxon>
        <taxon>Enterobacterales</taxon>
        <taxon>Enterobacteriaceae</taxon>
        <taxon>Escherichia</taxon>
    </lineage>
</organism>
<gene>
    <name evidence="1" type="primary">yacG</name>
    <name type="ordered locus">ECDH10B_0082</name>
</gene>
<dbReference type="EMBL" id="CP000948">
    <property type="protein sequence ID" value="ACB01281.1"/>
    <property type="molecule type" value="Genomic_DNA"/>
</dbReference>
<dbReference type="RefSeq" id="WP_000005042.1">
    <property type="nucleotide sequence ID" value="NC_010473.1"/>
</dbReference>
<dbReference type="SMR" id="B1XC77"/>
<dbReference type="GeneID" id="93777334"/>
<dbReference type="KEGG" id="ecd:ECDH10B_0082"/>
<dbReference type="HOGENOM" id="CLU_178280_3_1_6"/>
<dbReference type="GO" id="GO:0008657">
    <property type="term" value="F:DNA topoisomerase type II (double strand cut, ATP-hydrolyzing) inhibitor activity"/>
    <property type="evidence" value="ECO:0007669"/>
    <property type="project" value="UniProtKB-UniRule"/>
</dbReference>
<dbReference type="GO" id="GO:0008270">
    <property type="term" value="F:zinc ion binding"/>
    <property type="evidence" value="ECO:0007669"/>
    <property type="project" value="UniProtKB-UniRule"/>
</dbReference>
<dbReference type="GO" id="GO:0006355">
    <property type="term" value="P:regulation of DNA-templated transcription"/>
    <property type="evidence" value="ECO:0007669"/>
    <property type="project" value="InterPro"/>
</dbReference>
<dbReference type="FunFam" id="3.30.50.10:FF:000026">
    <property type="entry name" value="DNA gyrase inhibitor YacG"/>
    <property type="match status" value="1"/>
</dbReference>
<dbReference type="Gene3D" id="3.30.50.10">
    <property type="entry name" value="Erythroid Transcription Factor GATA-1, subunit A"/>
    <property type="match status" value="1"/>
</dbReference>
<dbReference type="HAMAP" id="MF_00649">
    <property type="entry name" value="DNA_gyrase_inhibitor_YacG"/>
    <property type="match status" value="1"/>
</dbReference>
<dbReference type="InterPro" id="IPR005584">
    <property type="entry name" value="DNA_gyrase_inhibitor_YacG"/>
</dbReference>
<dbReference type="InterPro" id="IPR013088">
    <property type="entry name" value="Znf_NHR/GATA"/>
</dbReference>
<dbReference type="NCBIfam" id="NF001638">
    <property type="entry name" value="PRK00418.1"/>
    <property type="match status" value="1"/>
</dbReference>
<dbReference type="PANTHER" id="PTHR36150">
    <property type="entry name" value="DNA GYRASE INHIBITOR YACG"/>
    <property type="match status" value="1"/>
</dbReference>
<dbReference type="PANTHER" id="PTHR36150:SF1">
    <property type="entry name" value="DNA GYRASE INHIBITOR YACG"/>
    <property type="match status" value="1"/>
</dbReference>
<dbReference type="Pfam" id="PF03884">
    <property type="entry name" value="YacG"/>
    <property type="match status" value="1"/>
</dbReference>
<dbReference type="SUPFAM" id="SSF57716">
    <property type="entry name" value="Glucocorticoid receptor-like (DNA-binding domain)"/>
    <property type="match status" value="1"/>
</dbReference>
<name>YACG_ECODH</name>
<sequence length="65" mass="7306">MSETITVNCPTCGKTVVWGEISPFRPFCSKRCQLIDLGEWAAEEKRIPSSGDLSESDDWSEEPKQ</sequence>
<feature type="chain" id="PRO_1000130960" description="DNA gyrase inhibitor YacG">
    <location>
        <begin position="1"/>
        <end position="65"/>
    </location>
</feature>
<feature type="region of interest" description="Disordered" evidence="2">
    <location>
        <begin position="45"/>
        <end position="65"/>
    </location>
</feature>
<feature type="compositionally biased region" description="Acidic residues" evidence="2">
    <location>
        <begin position="54"/>
        <end position="65"/>
    </location>
</feature>
<feature type="binding site" evidence="1">
    <location>
        <position position="9"/>
    </location>
    <ligand>
        <name>Zn(2+)</name>
        <dbReference type="ChEBI" id="CHEBI:29105"/>
    </ligand>
</feature>
<feature type="binding site" evidence="1">
    <location>
        <position position="12"/>
    </location>
    <ligand>
        <name>Zn(2+)</name>
        <dbReference type="ChEBI" id="CHEBI:29105"/>
    </ligand>
</feature>
<feature type="binding site" evidence="1">
    <location>
        <position position="28"/>
    </location>
    <ligand>
        <name>Zn(2+)</name>
        <dbReference type="ChEBI" id="CHEBI:29105"/>
    </ligand>
</feature>
<feature type="binding site" evidence="1">
    <location>
        <position position="32"/>
    </location>
    <ligand>
        <name>Zn(2+)</name>
        <dbReference type="ChEBI" id="CHEBI:29105"/>
    </ligand>
</feature>
<proteinExistence type="inferred from homology"/>
<accession>B1XC77</accession>
<protein>
    <recommendedName>
        <fullName evidence="1">DNA gyrase inhibitor YacG</fullName>
    </recommendedName>
</protein>
<keyword id="KW-0479">Metal-binding</keyword>
<keyword id="KW-0862">Zinc</keyword>